<dbReference type="EMBL" id="U12141">
    <property type="protein sequence ID" value="AAA99655.1"/>
    <property type="molecule type" value="Genomic_DNA"/>
</dbReference>
<dbReference type="EMBL" id="Z71332">
    <property type="protein sequence ID" value="CAA95929.1"/>
    <property type="molecule type" value="Genomic_DNA"/>
</dbReference>
<dbReference type="EMBL" id="AY692633">
    <property type="protein sequence ID" value="AAT92652.1"/>
    <property type="molecule type" value="Genomic_DNA"/>
</dbReference>
<dbReference type="EMBL" id="BK006947">
    <property type="protein sequence ID" value="DAA10488.1"/>
    <property type="molecule type" value="Genomic_DNA"/>
</dbReference>
<dbReference type="PIR" id="S62984">
    <property type="entry name" value="S62984"/>
</dbReference>
<dbReference type="RefSeq" id="NP_014342.3">
    <property type="nucleotide sequence ID" value="NM_001182895.3"/>
</dbReference>
<dbReference type="SMR" id="P53949"/>
<dbReference type="BioGRID" id="35765">
    <property type="interactions" value="329"/>
</dbReference>
<dbReference type="DIP" id="DIP-1989N"/>
<dbReference type="FunCoup" id="P53949">
    <property type="interactions" value="45"/>
</dbReference>
<dbReference type="IntAct" id="P53949">
    <property type="interactions" value="11"/>
</dbReference>
<dbReference type="MINT" id="P53949"/>
<dbReference type="STRING" id="4932.YNL056W"/>
<dbReference type="iPTMnet" id="P53949"/>
<dbReference type="PaxDb" id="4932-YNL056W"/>
<dbReference type="PeptideAtlas" id="P53949"/>
<dbReference type="EnsemblFungi" id="YNL056W_mRNA">
    <property type="protein sequence ID" value="YNL056W"/>
    <property type="gene ID" value="YNL056W"/>
</dbReference>
<dbReference type="GeneID" id="855668"/>
<dbReference type="KEGG" id="sce:YNL056W"/>
<dbReference type="AGR" id="SGD:S000005001"/>
<dbReference type="SGD" id="S000005001">
    <property type="gene designation" value="OCA2"/>
</dbReference>
<dbReference type="VEuPathDB" id="FungiDB:YNL056W"/>
<dbReference type="eggNOG" id="KOG1572">
    <property type="taxonomic scope" value="Eukaryota"/>
</dbReference>
<dbReference type="GeneTree" id="ENSGT00940000176301"/>
<dbReference type="HOGENOM" id="CLU_047845_3_1_1"/>
<dbReference type="InParanoid" id="P53949"/>
<dbReference type="OMA" id="MPLNYSF"/>
<dbReference type="OrthoDB" id="6375174at2759"/>
<dbReference type="BioCyc" id="YEAST:G3O-33088-MONOMER"/>
<dbReference type="BioGRID-ORCS" id="855668">
    <property type="hits" value="0 hits in 10 CRISPR screens"/>
</dbReference>
<dbReference type="PRO" id="PR:P53949"/>
<dbReference type="Proteomes" id="UP000002311">
    <property type="component" value="Chromosome XIV"/>
</dbReference>
<dbReference type="RNAct" id="P53949">
    <property type="molecule type" value="protein"/>
</dbReference>
<dbReference type="GO" id="GO:0005737">
    <property type="term" value="C:cytoplasm"/>
    <property type="evidence" value="ECO:0007005"/>
    <property type="project" value="SGD"/>
</dbReference>
<dbReference type="GO" id="GO:0052840">
    <property type="term" value="F:inositol diphosphate tetrakisphosphate diphosphatase activity"/>
    <property type="evidence" value="ECO:0000318"/>
    <property type="project" value="GO_Central"/>
</dbReference>
<dbReference type="GO" id="GO:0016791">
    <property type="term" value="F:phosphatase activity"/>
    <property type="evidence" value="ECO:0000318"/>
    <property type="project" value="GO_Central"/>
</dbReference>
<dbReference type="CDD" id="cd17661">
    <property type="entry name" value="PFA-DSP_Oca2"/>
    <property type="match status" value="1"/>
</dbReference>
<dbReference type="FunFam" id="3.90.190.10:FF:000035">
    <property type="entry name" value="Tyrosine phosphatase, putative"/>
    <property type="match status" value="1"/>
</dbReference>
<dbReference type="Gene3D" id="3.90.190.10">
    <property type="entry name" value="Protein tyrosine phosphatase superfamily"/>
    <property type="match status" value="1"/>
</dbReference>
<dbReference type="InterPro" id="IPR029021">
    <property type="entry name" value="Prot-tyrosine_phosphatase-like"/>
</dbReference>
<dbReference type="InterPro" id="IPR004861">
    <property type="entry name" value="Siw14-like"/>
</dbReference>
<dbReference type="InterPro" id="IPR020422">
    <property type="entry name" value="TYR_PHOSPHATASE_DUAL_dom"/>
</dbReference>
<dbReference type="PANTHER" id="PTHR31126">
    <property type="entry name" value="TYROSINE-PROTEIN PHOSPHATASE"/>
    <property type="match status" value="1"/>
</dbReference>
<dbReference type="PANTHER" id="PTHR31126:SF74">
    <property type="entry name" value="TYROSINE-PROTEIN PHOSPHATASE-LIKE PROTEIN OCA2"/>
    <property type="match status" value="1"/>
</dbReference>
<dbReference type="Pfam" id="PF03162">
    <property type="entry name" value="Y_phosphatase2"/>
    <property type="match status" value="1"/>
</dbReference>
<dbReference type="SUPFAM" id="SSF52799">
    <property type="entry name" value="(Phosphotyrosine protein) phosphatases II"/>
    <property type="match status" value="1"/>
</dbReference>
<dbReference type="PROSITE" id="PS50054">
    <property type="entry name" value="TYR_PHOSPHATASE_DUAL"/>
    <property type="match status" value="1"/>
</dbReference>
<feature type="chain" id="PRO_0000203451" description="Tyrosine-protein phosphatase-like protein OCA2">
    <location>
        <begin position="1"/>
        <end position="197"/>
    </location>
</feature>
<feature type="domain" description="Tyrosine-protein phosphatase" evidence="1">
    <location>
        <begin position="10"/>
        <end position="160"/>
    </location>
</feature>
<feature type="modified residue" description="Phosphoserine" evidence="5 6">
    <location>
        <position position="181"/>
    </location>
</feature>
<feature type="sequence conflict" description="In Ref. 5; AAT92652." evidence="4" ref="5">
    <original>P</original>
    <variation>S</variation>
    <location>
        <position position="11"/>
    </location>
</feature>
<keyword id="KW-0963">Cytoplasm</keyword>
<keyword id="KW-0378">Hydrolase</keyword>
<keyword id="KW-0597">Phosphoprotein</keyword>
<keyword id="KW-1185">Reference proteome</keyword>
<comment type="function">
    <text>Required for normal growth in the presence of linoleic acid hydroperoxide (LoaOOH).</text>
</comment>
<comment type="interaction">
    <interactant intactId="EBI-28725">
        <id>P53949</id>
    </interactant>
    <interactant intactId="EBI-28814">
        <id>P50946</id>
        <label>OCA1</label>
    </interactant>
    <organismsDiffer>false</organismsDiffer>
    <experiments>5</experiments>
</comment>
<comment type="interaction">
    <interactant intactId="EBI-28725">
        <id>P53949</id>
    </interactant>
    <interactant intactId="EBI-28668">
        <id>P53965</id>
        <label>SIW14</label>
    </interactant>
    <organismsDiffer>false</organismsDiffer>
    <experiments>4</experiments>
</comment>
<comment type="subcellular location">
    <subcellularLocation>
        <location evidence="2">Cytoplasm</location>
    </subcellularLocation>
</comment>
<comment type="miscellaneous">
    <text evidence="3">Present with 4530 molecules/cell in log phase SD medium.</text>
</comment>
<comment type="similarity">
    <text evidence="4">Belongs to the protein-tyrosine phosphatase family.</text>
</comment>
<proteinExistence type="evidence at protein level"/>
<reference key="1">
    <citation type="journal article" date="1995" name="Yeast">
        <title>The sequence of a 44 420 bp fragment located on the left arm of chromosome XIV from Saccharomyces cerevisiae.</title>
        <authorList>
            <person name="Bergez P."/>
            <person name="Doignon F."/>
            <person name="Crouzet M."/>
        </authorList>
    </citation>
    <scope>NUCLEOTIDE SEQUENCE [GENOMIC DNA]</scope>
    <source>
        <strain>S288c / FY1676</strain>
    </source>
</reference>
<reference key="2">
    <citation type="journal article" date="1996" name="Yeast">
        <authorList>
            <person name="Bergez P."/>
            <person name="Doignon F."/>
            <person name="Crouzet M."/>
        </authorList>
    </citation>
    <scope>ERRATUM OF PUBMED:8533472</scope>
</reference>
<reference key="3">
    <citation type="journal article" date="1997" name="Nature">
        <title>The nucleotide sequence of Saccharomyces cerevisiae chromosome XIV and its evolutionary implications.</title>
        <authorList>
            <person name="Philippsen P."/>
            <person name="Kleine K."/>
            <person name="Poehlmann R."/>
            <person name="Duesterhoeft A."/>
            <person name="Hamberg K."/>
            <person name="Hegemann J.H."/>
            <person name="Obermaier B."/>
            <person name="Urrestarazu L.A."/>
            <person name="Aert R."/>
            <person name="Albermann K."/>
            <person name="Altmann R."/>
            <person name="Andre B."/>
            <person name="Baladron V."/>
            <person name="Ballesta J.P.G."/>
            <person name="Becam A.-M."/>
            <person name="Beinhauer J.D."/>
            <person name="Boskovic J."/>
            <person name="Buitrago M.J."/>
            <person name="Bussereau F."/>
            <person name="Coster F."/>
            <person name="Crouzet M."/>
            <person name="D'Angelo M."/>
            <person name="Dal Pero F."/>
            <person name="De Antoni A."/>
            <person name="del Rey F."/>
            <person name="Doignon F."/>
            <person name="Domdey H."/>
            <person name="Dubois E."/>
            <person name="Fiedler T.A."/>
            <person name="Fleig U."/>
            <person name="Floeth M."/>
            <person name="Fritz C."/>
            <person name="Gaillardin C."/>
            <person name="Garcia-Cantalejo J.M."/>
            <person name="Glansdorff N."/>
            <person name="Goffeau A."/>
            <person name="Gueldener U."/>
            <person name="Herbert C.J."/>
            <person name="Heumann K."/>
            <person name="Heuss-Neitzel D."/>
            <person name="Hilbert H."/>
            <person name="Hinni K."/>
            <person name="Iraqui Houssaini I."/>
            <person name="Jacquet M."/>
            <person name="Jimenez A."/>
            <person name="Jonniaux J.-L."/>
            <person name="Karpfinger-Hartl L."/>
            <person name="Lanfranchi G."/>
            <person name="Lepingle A."/>
            <person name="Levesque H."/>
            <person name="Lyck R."/>
            <person name="Maftahi M."/>
            <person name="Mallet L."/>
            <person name="Maurer C.T.C."/>
            <person name="Messenguy F."/>
            <person name="Mewes H.-W."/>
            <person name="Moestl D."/>
            <person name="Nasr F."/>
            <person name="Nicaud J.-M."/>
            <person name="Niedenthal R.K."/>
            <person name="Pandolfo D."/>
            <person name="Pierard A."/>
            <person name="Piravandi E."/>
            <person name="Planta R.J."/>
            <person name="Pohl T.M."/>
            <person name="Purnelle B."/>
            <person name="Rebischung C."/>
            <person name="Remacha M.A."/>
            <person name="Revuelta J.L."/>
            <person name="Rinke M."/>
            <person name="Saiz J.E."/>
            <person name="Sartorello F."/>
            <person name="Scherens B."/>
            <person name="Sen-Gupta M."/>
            <person name="Soler-Mira A."/>
            <person name="Urbanus J.H.M."/>
            <person name="Valle G."/>
            <person name="Van Dyck L."/>
            <person name="Verhasselt P."/>
            <person name="Vierendeels F."/>
            <person name="Vissers S."/>
            <person name="Voet M."/>
            <person name="Volckaert G."/>
            <person name="Wach A."/>
            <person name="Wambutt R."/>
            <person name="Wedler H."/>
            <person name="Zollner A."/>
            <person name="Hani J."/>
        </authorList>
    </citation>
    <scope>NUCLEOTIDE SEQUENCE [LARGE SCALE GENOMIC DNA]</scope>
    <source>
        <strain>ATCC 204508 / S288c</strain>
    </source>
</reference>
<reference key="4">
    <citation type="journal article" date="2014" name="G3 (Bethesda)">
        <title>The reference genome sequence of Saccharomyces cerevisiae: Then and now.</title>
        <authorList>
            <person name="Engel S.R."/>
            <person name="Dietrich F.S."/>
            <person name="Fisk D.G."/>
            <person name="Binkley G."/>
            <person name="Balakrishnan R."/>
            <person name="Costanzo M.C."/>
            <person name="Dwight S.S."/>
            <person name="Hitz B.C."/>
            <person name="Karra K."/>
            <person name="Nash R.S."/>
            <person name="Weng S."/>
            <person name="Wong E.D."/>
            <person name="Lloyd P."/>
            <person name="Skrzypek M.S."/>
            <person name="Miyasato S.R."/>
            <person name="Simison M."/>
            <person name="Cherry J.M."/>
        </authorList>
    </citation>
    <scope>GENOME REANNOTATION</scope>
    <source>
        <strain>ATCC 204508 / S288c</strain>
    </source>
</reference>
<reference key="5">
    <citation type="journal article" date="2007" name="Genome Res.">
        <title>Approaching a complete repository of sequence-verified protein-encoding clones for Saccharomyces cerevisiae.</title>
        <authorList>
            <person name="Hu Y."/>
            <person name="Rolfs A."/>
            <person name="Bhullar B."/>
            <person name="Murthy T.V.S."/>
            <person name="Zhu C."/>
            <person name="Berger M.F."/>
            <person name="Camargo A.A."/>
            <person name="Kelley F."/>
            <person name="McCarron S."/>
            <person name="Jepson D."/>
            <person name="Richardson A."/>
            <person name="Raphael J."/>
            <person name="Moreira D."/>
            <person name="Taycher E."/>
            <person name="Zuo D."/>
            <person name="Mohr S."/>
            <person name="Kane M.F."/>
            <person name="Williamson J."/>
            <person name="Simpson A.J.G."/>
            <person name="Bulyk M.L."/>
            <person name="Harlow E."/>
            <person name="Marsischky G."/>
            <person name="Kolodner R.D."/>
            <person name="LaBaer J."/>
        </authorList>
    </citation>
    <scope>NUCLEOTIDE SEQUENCE [GENOMIC DNA]</scope>
    <source>
        <strain>ATCC 204508 / S288c</strain>
    </source>
</reference>
<reference key="6">
    <citation type="journal article" date="2003" name="Nature">
        <title>Global analysis of protein localization in budding yeast.</title>
        <authorList>
            <person name="Huh W.-K."/>
            <person name="Falvo J.V."/>
            <person name="Gerke L.C."/>
            <person name="Carroll A.S."/>
            <person name="Howson R.W."/>
            <person name="Weissman J.S."/>
            <person name="O'Shea E.K."/>
        </authorList>
    </citation>
    <scope>SUBCELLULAR LOCATION [LARGE SCALE ANALYSIS]</scope>
</reference>
<reference key="7">
    <citation type="journal article" date="2003" name="Nature">
        <title>Global analysis of protein expression in yeast.</title>
        <authorList>
            <person name="Ghaemmaghami S."/>
            <person name="Huh W.-K."/>
            <person name="Bower K."/>
            <person name="Howson R.W."/>
            <person name="Belle A."/>
            <person name="Dephoure N."/>
            <person name="O'Shea E.K."/>
            <person name="Weissman J.S."/>
        </authorList>
    </citation>
    <scope>LEVEL OF PROTEIN EXPRESSION [LARGE SCALE ANALYSIS]</scope>
</reference>
<reference key="8">
    <citation type="journal article" date="2007" name="J. Proteome Res.">
        <title>Large-scale phosphorylation analysis of alpha-factor-arrested Saccharomyces cerevisiae.</title>
        <authorList>
            <person name="Li X."/>
            <person name="Gerber S.A."/>
            <person name="Rudner A.D."/>
            <person name="Beausoleil S.A."/>
            <person name="Haas W."/>
            <person name="Villen J."/>
            <person name="Elias J.E."/>
            <person name="Gygi S.P."/>
        </authorList>
    </citation>
    <scope>PHOSPHORYLATION [LARGE SCALE ANALYSIS] AT SER-181</scope>
    <scope>IDENTIFICATION BY MASS SPECTROMETRY [LARGE SCALE ANALYSIS]</scope>
    <source>
        <strain>ADR376</strain>
    </source>
</reference>
<reference key="9">
    <citation type="journal article" date="2009" name="Science">
        <title>Global analysis of Cdk1 substrate phosphorylation sites provides insights into evolution.</title>
        <authorList>
            <person name="Holt L.J."/>
            <person name="Tuch B.B."/>
            <person name="Villen J."/>
            <person name="Johnson A.D."/>
            <person name="Gygi S.P."/>
            <person name="Morgan D.O."/>
        </authorList>
    </citation>
    <scope>PHOSPHORYLATION [LARGE SCALE ANALYSIS] AT SER-181</scope>
    <scope>IDENTIFICATION BY MASS SPECTROMETRY [LARGE SCALE ANALYSIS]</scope>
</reference>
<evidence type="ECO:0000255" key="1">
    <source>
        <dbReference type="PROSITE-ProRule" id="PRU00160"/>
    </source>
</evidence>
<evidence type="ECO:0000269" key="2">
    <source>
    </source>
</evidence>
<evidence type="ECO:0000269" key="3">
    <source>
    </source>
</evidence>
<evidence type="ECO:0000305" key="4"/>
<evidence type="ECO:0007744" key="5">
    <source>
    </source>
</evidence>
<evidence type="ECO:0007744" key="6">
    <source>
    </source>
</evidence>
<organism>
    <name type="scientific">Saccharomyces cerevisiae (strain ATCC 204508 / S288c)</name>
    <name type="common">Baker's yeast</name>
    <dbReference type="NCBI Taxonomy" id="559292"/>
    <lineage>
        <taxon>Eukaryota</taxon>
        <taxon>Fungi</taxon>
        <taxon>Dikarya</taxon>
        <taxon>Ascomycota</taxon>
        <taxon>Saccharomycotina</taxon>
        <taxon>Saccharomycetes</taxon>
        <taxon>Saccharomycetales</taxon>
        <taxon>Saccharomycetaceae</taxon>
        <taxon>Saccharomyces</taxon>
    </lineage>
</organism>
<gene>
    <name type="primary">OCA2</name>
    <name type="ordered locus">YNL056W</name>
    <name type="ORF">N2439</name>
    <name type="ORF">YNL2439W</name>
</gene>
<name>OCA2_YEAST</name>
<sequence length="197" mass="22472">MKYIPPLNFSPVVSTDVSLYRSGYPMPLNYSFIKHQLHLKTIIYIGDKDRPLEEYQSFLESEKIKYYHIFMDSSRDEGIQERMNQVLHLVLDVRNYPILVHSNKGKHRVGVVVGIIRKLLQGWSTAGICQEYGLFSGGMKDGVDLEFITMFETNLKIPRNVIPGFAKHCLYLNELEAAEGSDDESGSESILTAKQPI</sequence>
<accession>P53949</accession>
<accession>D6W1C2</accession>
<accession>Q6B2U7</accession>
<protein>
    <recommendedName>
        <fullName>Tyrosine-protein phosphatase-like protein OCA2</fullName>
    </recommendedName>
    <alternativeName>
        <fullName>Oxidant-induced cell-cycle arrest protein 2</fullName>
    </alternativeName>
</protein>